<reference key="1">
    <citation type="submission" date="2006-08" db="EMBL/GenBank/DDBJ databases">
        <title>Complete sequence of Alkalilimnicola ehrilichei MLHE-1.</title>
        <authorList>
            <person name="Copeland A."/>
            <person name="Lucas S."/>
            <person name="Lapidus A."/>
            <person name="Barry K."/>
            <person name="Detter J.C."/>
            <person name="Glavina del Rio T."/>
            <person name="Hammon N."/>
            <person name="Israni S."/>
            <person name="Dalin E."/>
            <person name="Tice H."/>
            <person name="Pitluck S."/>
            <person name="Sims D."/>
            <person name="Brettin T."/>
            <person name="Bruce D."/>
            <person name="Han C."/>
            <person name="Tapia R."/>
            <person name="Gilna P."/>
            <person name="Schmutz J."/>
            <person name="Larimer F."/>
            <person name="Land M."/>
            <person name="Hauser L."/>
            <person name="Kyrpides N."/>
            <person name="Mikhailova N."/>
            <person name="Oremland R.S."/>
            <person name="Hoeft S.E."/>
            <person name="Switzer-Blum J."/>
            <person name="Kulp T."/>
            <person name="King G."/>
            <person name="Tabita R."/>
            <person name="Witte B."/>
            <person name="Santini J.M."/>
            <person name="Basu P."/>
            <person name="Hollibaugh J.T."/>
            <person name="Xie G."/>
            <person name="Stolz J.F."/>
            <person name="Richardson P."/>
        </authorList>
    </citation>
    <scope>NUCLEOTIDE SEQUENCE [LARGE SCALE GENOMIC DNA]</scope>
    <source>
        <strain>ATCC BAA-1101 / DSM 17681 / MLHE-1</strain>
    </source>
</reference>
<dbReference type="EC" id="4.2.1.10" evidence="1"/>
<dbReference type="EMBL" id="CP000453">
    <property type="protein sequence ID" value="ABI55383.1"/>
    <property type="molecule type" value="Genomic_DNA"/>
</dbReference>
<dbReference type="RefSeq" id="WP_011627779.1">
    <property type="nucleotide sequence ID" value="NC_008340.1"/>
</dbReference>
<dbReference type="SMR" id="Q0ACQ4"/>
<dbReference type="KEGG" id="aeh:Mlg_0024"/>
<dbReference type="eggNOG" id="COG0757">
    <property type="taxonomic scope" value="Bacteria"/>
</dbReference>
<dbReference type="HOGENOM" id="CLU_090968_1_0_6"/>
<dbReference type="OrthoDB" id="9790793at2"/>
<dbReference type="UniPathway" id="UPA00053">
    <property type="reaction ID" value="UER00086"/>
</dbReference>
<dbReference type="Proteomes" id="UP000001962">
    <property type="component" value="Chromosome"/>
</dbReference>
<dbReference type="GO" id="GO:0003855">
    <property type="term" value="F:3-dehydroquinate dehydratase activity"/>
    <property type="evidence" value="ECO:0007669"/>
    <property type="project" value="UniProtKB-UniRule"/>
</dbReference>
<dbReference type="GO" id="GO:0008652">
    <property type="term" value="P:amino acid biosynthetic process"/>
    <property type="evidence" value="ECO:0007669"/>
    <property type="project" value="UniProtKB-KW"/>
</dbReference>
<dbReference type="GO" id="GO:0009073">
    <property type="term" value="P:aromatic amino acid family biosynthetic process"/>
    <property type="evidence" value="ECO:0007669"/>
    <property type="project" value="UniProtKB-KW"/>
</dbReference>
<dbReference type="GO" id="GO:0009423">
    <property type="term" value="P:chorismate biosynthetic process"/>
    <property type="evidence" value="ECO:0007669"/>
    <property type="project" value="UniProtKB-UniRule"/>
</dbReference>
<dbReference type="GO" id="GO:0019631">
    <property type="term" value="P:quinate catabolic process"/>
    <property type="evidence" value="ECO:0007669"/>
    <property type="project" value="TreeGrafter"/>
</dbReference>
<dbReference type="CDD" id="cd00466">
    <property type="entry name" value="DHQase_II"/>
    <property type="match status" value="1"/>
</dbReference>
<dbReference type="Gene3D" id="3.40.50.9100">
    <property type="entry name" value="Dehydroquinase, class II"/>
    <property type="match status" value="1"/>
</dbReference>
<dbReference type="HAMAP" id="MF_00169">
    <property type="entry name" value="AroQ"/>
    <property type="match status" value="1"/>
</dbReference>
<dbReference type="InterPro" id="IPR001874">
    <property type="entry name" value="DHquinase_II"/>
</dbReference>
<dbReference type="InterPro" id="IPR018509">
    <property type="entry name" value="DHquinase_II_CS"/>
</dbReference>
<dbReference type="InterPro" id="IPR036441">
    <property type="entry name" value="DHquinase_II_sf"/>
</dbReference>
<dbReference type="NCBIfam" id="TIGR01088">
    <property type="entry name" value="aroQ"/>
    <property type="match status" value="1"/>
</dbReference>
<dbReference type="NCBIfam" id="NF003804">
    <property type="entry name" value="PRK05395.1-1"/>
    <property type="match status" value="1"/>
</dbReference>
<dbReference type="NCBIfam" id="NF003805">
    <property type="entry name" value="PRK05395.1-2"/>
    <property type="match status" value="1"/>
</dbReference>
<dbReference type="NCBIfam" id="NF003806">
    <property type="entry name" value="PRK05395.1-3"/>
    <property type="match status" value="1"/>
</dbReference>
<dbReference type="NCBIfam" id="NF003807">
    <property type="entry name" value="PRK05395.1-4"/>
    <property type="match status" value="1"/>
</dbReference>
<dbReference type="PANTHER" id="PTHR21272">
    <property type="entry name" value="CATABOLIC 3-DEHYDROQUINASE"/>
    <property type="match status" value="1"/>
</dbReference>
<dbReference type="PANTHER" id="PTHR21272:SF3">
    <property type="entry name" value="CATABOLIC 3-DEHYDROQUINASE"/>
    <property type="match status" value="1"/>
</dbReference>
<dbReference type="Pfam" id="PF01220">
    <property type="entry name" value="DHquinase_II"/>
    <property type="match status" value="1"/>
</dbReference>
<dbReference type="PIRSF" id="PIRSF001399">
    <property type="entry name" value="DHquinase_II"/>
    <property type="match status" value="1"/>
</dbReference>
<dbReference type="SUPFAM" id="SSF52304">
    <property type="entry name" value="Type II 3-dehydroquinate dehydratase"/>
    <property type="match status" value="1"/>
</dbReference>
<dbReference type="PROSITE" id="PS01029">
    <property type="entry name" value="DEHYDROQUINASE_II"/>
    <property type="match status" value="1"/>
</dbReference>
<evidence type="ECO:0000255" key="1">
    <source>
        <dbReference type="HAMAP-Rule" id="MF_00169"/>
    </source>
</evidence>
<keyword id="KW-0028">Amino-acid biosynthesis</keyword>
<keyword id="KW-0057">Aromatic amino acid biosynthesis</keyword>
<keyword id="KW-0456">Lyase</keyword>
<keyword id="KW-1185">Reference proteome</keyword>
<sequence>MPELLLLNGPNLNLLGTREPGIYGSDTLADIERRLGEQCAGAGVRFSAFQTNAEHALIDRIHQAGRAGVDFILINPGAWTHTSIALRDALLGVGIPFIEIHISNVHAREPFRRQSYLADVAVGVISGLGVHGYELALQAALKRLDGSPRGQH</sequence>
<gene>
    <name evidence="1" type="primary">aroQ</name>
    <name type="ordered locus">Mlg_0024</name>
</gene>
<accession>Q0ACQ4</accession>
<feature type="chain" id="PRO_1000023449" description="3-dehydroquinate dehydratase">
    <location>
        <begin position="1"/>
        <end position="152"/>
    </location>
</feature>
<feature type="active site" description="Proton acceptor" evidence="1">
    <location>
        <position position="23"/>
    </location>
</feature>
<feature type="active site" description="Proton donor" evidence="1">
    <location>
        <position position="101"/>
    </location>
</feature>
<feature type="binding site" evidence="1">
    <location>
        <position position="75"/>
    </location>
    <ligand>
        <name>substrate</name>
    </ligand>
</feature>
<feature type="binding site" evidence="1">
    <location>
        <position position="81"/>
    </location>
    <ligand>
        <name>substrate</name>
    </ligand>
</feature>
<feature type="binding site" evidence="1">
    <location>
        <position position="88"/>
    </location>
    <ligand>
        <name>substrate</name>
    </ligand>
</feature>
<feature type="binding site" evidence="1">
    <location>
        <begin position="102"/>
        <end position="103"/>
    </location>
    <ligand>
        <name>substrate</name>
    </ligand>
</feature>
<feature type="binding site" evidence="1">
    <location>
        <position position="112"/>
    </location>
    <ligand>
        <name>substrate</name>
    </ligand>
</feature>
<feature type="site" description="Transition state stabilizer" evidence="1">
    <location>
        <position position="18"/>
    </location>
</feature>
<protein>
    <recommendedName>
        <fullName evidence="1">3-dehydroquinate dehydratase</fullName>
        <shortName evidence="1">3-dehydroquinase</shortName>
        <ecNumber evidence="1">4.2.1.10</ecNumber>
    </recommendedName>
    <alternativeName>
        <fullName evidence="1">Type II DHQase</fullName>
    </alternativeName>
</protein>
<proteinExistence type="inferred from homology"/>
<name>AROQ_ALKEH</name>
<comment type="function">
    <text evidence="1">Catalyzes a trans-dehydration via an enolate intermediate.</text>
</comment>
<comment type="catalytic activity">
    <reaction evidence="1">
        <text>3-dehydroquinate = 3-dehydroshikimate + H2O</text>
        <dbReference type="Rhea" id="RHEA:21096"/>
        <dbReference type="ChEBI" id="CHEBI:15377"/>
        <dbReference type="ChEBI" id="CHEBI:16630"/>
        <dbReference type="ChEBI" id="CHEBI:32364"/>
        <dbReference type="EC" id="4.2.1.10"/>
    </reaction>
</comment>
<comment type="pathway">
    <text evidence="1">Metabolic intermediate biosynthesis; chorismate biosynthesis; chorismate from D-erythrose 4-phosphate and phosphoenolpyruvate: step 3/7.</text>
</comment>
<comment type="subunit">
    <text evidence="1">Homododecamer.</text>
</comment>
<comment type="similarity">
    <text evidence="1">Belongs to the type-II 3-dehydroquinase family.</text>
</comment>
<organism>
    <name type="scientific">Alkalilimnicola ehrlichii (strain ATCC BAA-1101 / DSM 17681 / MLHE-1)</name>
    <dbReference type="NCBI Taxonomy" id="187272"/>
    <lineage>
        <taxon>Bacteria</taxon>
        <taxon>Pseudomonadati</taxon>
        <taxon>Pseudomonadota</taxon>
        <taxon>Gammaproteobacteria</taxon>
        <taxon>Chromatiales</taxon>
        <taxon>Ectothiorhodospiraceae</taxon>
        <taxon>Alkalilimnicola</taxon>
    </lineage>
</organism>